<dbReference type="EMBL" id="EF432053">
    <property type="protein sequence ID" value="ABP73437.1"/>
    <property type="molecule type" value="Genomic_DNA"/>
</dbReference>
<dbReference type="RefSeq" id="YP_001210351.1">
    <property type="nucleotide sequence ID" value="NC_009452.1"/>
</dbReference>
<dbReference type="SMR" id="A4ZUD3"/>
<dbReference type="GeneID" id="5129822"/>
<dbReference type="KEGG" id="vg:5129822"/>
<dbReference type="Proteomes" id="UP000000513">
    <property type="component" value="Segment"/>
</dbReference>
<proteinExistence type="predicted"/>
<organismHost>
    <name type="scientific">Acidianus convivator</name>
    <dbReference type="NCBI Taxonomy" id="269667"/>
</organismHost>
<gene>
    <name type="ORF">ORF48b</name>
</gene>
<feature type="chain" id="PRO_0000384822" description="Uncharacterized protein ORF48b">
    <location>
        <begin position="1"/>
        <end position="48"/>
    </location>
</feature>
<reference key="1">
    <citation type="journal article" date="2007" name="Virology">
        <title>Genome of the Acidianus bottle-shaped virus and insights into the replication and packaging mechanisms.</title>
        <authorList>
            <person name="Peng X."/>
            <person name="Basta T."/>
            <person name="Haring M."/>
            <person name="Garrett R.A."/>
            <person name="Prangishvili D."/>
        </authorList>
    </citation>
    <scope>NUCLEOTIDE SEQUENCE [GENOMIC DNA]</scope>
</reference>
<sequence>MEVLILIIIFLLILTYTTFNFKINFVINNKEVTFSVREHTTSESSESS</sequence>
<name>Y048B_ABVP</name>
<organism>
    <name type="scientific">Acidianus bottle-shaped virus (isolate Italy/Pozzuoli)</name>
    <name type="common">ABV</name>
    <dbReference type="NCBI Taxonomy" id="654911"/>
    <lineage>
        <taxon>Viruses</taxon>
        <taxon>Viruses incertae sedis</taxon>
        <taxon>Ampullaviridae</taxon>
        <taxon>Bottigliavirus</taxon>
        <taxon>Bottigliavirus ABV</taxon>
    </lineage>
</organism>
<accession>A4ZUD3</accession>
<protein>
    <recommendedName>
        <fullName>Uncharacterized protein ORF48b</fullName>
    </recommendedName>
</protein>
<keyword id="KW-1185">Reference proteome</keyword>